<gene>
    <name evidence="1" type="primary">lgt</name>
    <name type="ordered locus">EFER_2761</name>
</gene>
<name>LGT_ESCF3</name>
<organism>
    <name type="scientific">Escherichia fergusonii (strain ATCC 35469 / DSM 13698 / CCUG 18766 / IAM 14443 / JCM 21226 / LMG 7866 / NBRC 102419 / NCTC 12128 / CDC 0568-73)</name>
    <dbReference type="NCBI Taxonomy" id="585054"/>
    <lineage>
        <taxon>Bacteria</taxon>
        <taxon>Pseudomonadati</taxon>
        <taxon>Pseudomonadota</taxon>
        <taxon>Gammaproteobacteria</taxon>
        <taxon>Enterobacterales</taxon>
        <taxon>Enterobacteriaceae</taxon>
        <taxon>Escherichia</taxon>
    </lineage>
</organism>
<evidence type="ECO:0000255" key="1">
    <source>
        <dbReference type="HAMAP-Rule" id="MF_01147"/>
    </source>
</evidence>
<keyword id="KW-0997">Cell inner membrane</keyword>
<keyword id="KW-1003">Cell membrane</keyword>
<keyword id="KW-0472">Membrane</keyword>
<keyword id="KW-0808">Transferase</keyword>
<keyword id="KW-0812">Transmembrane</keyword>
<keyword id="KW-1133">Transmembrane helix</keyword>
<accession>B7LNI3</accession>
<proteinExistence type="inferred from homology"/>
<protein>
    <recommendedName>
        <fullName evidence="1">Phosphatidylglycerol--prolipoprotein diacylglyceryl transferase</fullName>
        <ecNumber evidence="1">2.5.1.145</ecNumber>
    </recommendedName>
</protein>
<feature type="chain" id="PRO_1000137429" description="Phosphatidylglycerol--prolipoprotein diacylglyceryl transferase">
    <location>
        <begin position="1"/>
        <end position="291"/>
    </location>
</feature>
<feature type="transmembrane region" description="Helical" evidence="1">
    <location>
        <begin position="21"/>
        <end position="41"/>
    </location>
</feature>
<feature type="transmembrane region" description="Helical" evidence="1">
    <location>
        <begin position="60"/>
        <end position="80"/>
    </location>
</feature>
<feature type="transmembrane region" description="Helical" evidence="1">
    <location>
        <begin position="98"/>
        <end position="118"/>
    </location>
</feature>
<feature type="transmembrane region" description="Helical" evidence="1">
    <location>
        <begin position="225"/>
        <end position="245"/>
    </location>
</feature>
<feature type="transmembrane region" description="Helical" evidence="1">
    <location>
        <begin position="260"/>
        <end position="280"/>
    </location>
</feature>
<feature type="binding site" evidence="1">
    <location>
        <position position="143"/>
    </location>
    <ligand>
        <name>a 1,2-diacyl-sn-glycero-3-phospho-(1'-sn-glycerol)</name>
        <dbReference type="ChEBI" id="CHEBI:64716"/>
    </ligand>
</feature>
<comment type="function">
    <text evidence="1">Catalyzes the transfer of the diacylglyceryl group from phosphatidylglycerol to the sulfhydryl group of the N-terminal cysteine of a prolipoprotein, the first step in the formation of mature lipoproteins.</text>
</comment>
<comment type="catalytic activity">
    <reaction evidence="1">
        <text>L-cysteinyl-[prolipoprotein] + a 1,2-diacyl-sn-glycero-3-phospho-(1'-sn-glycerol) = an S-1,2-diacyl-sn-glyceryl-L-cysteinyl-[prolipoprotein] + sn-glycerol 1-phosphate + H(+)</text>
        <dbReference type="Rhea" id="RHEA:56712"/>
        <dbReference type="Rhea" id="RHEA-COMP:14679"/>
        <dbReference type="Rhea" id="RHEA-COMP:14680"/>
        <dbReference type="ChEBI" id="CHEBI:15378"/>
        <dbReference type="ChEBI" id="CHEBI:29950"/>
        <dbReference type="ChEBI" id="CHEBI:57685"/>
        <dbReference type="ChEBI" id="CHEBI:64716"/>
        <dbReference type="ChEBI" id="CHEBI:140658"/>
        <dbReference type="EC" id="2.5.1.145"/>
    </reaction>
</comment>
<comment type="pathway">
    <text evidence="1">Protein modification; lipoprotein biosynthesis (diacylglyceryl transfer).</text>
</comment>
<comment type="subcellular location">
    <subcellularLocation>
        <location evidence="1">Cell inner membrane</location>
        <topology evidence="1">Multi-pass membrane protein</topology>
    </subcellularLocation>
</comment>
<comment type="similarity">
    <text evidence="1">Belongs to the Lgt family.</text>
</comment>
<reference key="1">
    <citation type="journal article" date="2009" name="PLoS Genet.">
        <title>Organised genome dynamics in the Escherichia coli species results in highly diverse adaptive paths.</title>
        <authorList>
            <person name="Touchon M."/>
            <person name="Hoede C."/>
            <person name="Tenaillon O."/>
            <person name="Barbe V."/>
            <person name="Baeriswyl S."/>
            <person name="Bidet P."/>
            <person name="Bingen E."/>
            <person name="Bonacorsi S."/>
            <person name="Bouchier C."/>
            <person name="Bouvet O."/>
            <person name="Calteau A."/>
            <person name="Chiapello H."/>
            <person name="Clermont O."/>
            <person name="Cruveiller S."/>
            <person name="Danchin A."/>
            <person name="Diard M."/>
            <person name="Dossat C."/>
            <person name="Karoui M.E."/>
            <person name="Frapy E."/>
            <person name="Garry L."/>
            <person name="Ghigo J.M."/>
            <person name="Gilles A.M."/>
            <person name="Johnson J."/>
            <person name="Le Bouguenec C."/>
            <person name="Lescat M."/>
            <person name="Mangenot S."/>
            <person name="Martinez-Jehanne V."/>
            <person name="Matic I."/>
            <person name="Nassif X."/>
            <person name="Oztas S."/>
            <person name="Petit M.A."/>
            <person name="Pichon C."/>
            <person name="Rouy Z."/>
            <person name="Ruf C.S."/>
            <person name="Schneider D."/>
            <person name="Tourret J."/>
            <person name="Vacherie B."/>
            <person name="Vallenet D."/>
            <person name="Medigue C."/>
            <person name="Rocha E.P.C."/>
            <person name="Denamur E."/>
        </authorList>
    </citation>
    <scope>NUCLEOTIDE SEQUENCE [LARGE SCALE GENOMIC DNA]</scope>
    <source>
        <strain>ATCC 35469 / DSM 13698 / BCRC 15582 / CCUG 18766 / IAM 14443 / JCM 21226 / LMG 7866 / NBRC 102419 / NCTC 12128 / CDC 0568-73</strain>
    </source>
</reference>
<sequence>MTSSYLHFPEFDPVIFSIGPVALHWYGLMYLVGFIFAMWLATRRANRPGSGWTKNEVENLLYAGFLGVFLGGRIGYVLFYNFPQFLDDPLYLFRVWDGGMSFHGGLIGVIVVMFIFAHRTKRSFFQVSDFIAPLIPFGLGAGRLGNFINGELWGRVDPNFPFAMLFPGSRTEDILLLQTNPQWQSIFDTYGVLPRHPSQLYELLLEGVVLFIILNLYIRKPRPMGAVSGLFLIGYGAFRIIVEFFRQPDAQFTGAWVQYISMGQILSIPMIVAGVIMMVWAYRRSPQQHVS</sequence>
<dbReference type="EC" id="2.5.1.145" evidence="1"/>
<dbReference type="EMBL" id="CU928158">
    <property type="protein sequence ID" value="CAQ90256.1"/>
    <property type="molecule type" value="Genomic_DNA"/>
</dbReference>
<dbReference type="RefSeq" id="WP_000204654.1">
    <property type="nucleotide sequence ID" value="NC_011740.1"/>
</dbReference>
<dbReference type="SMR" id="B7LNI3"/>
<dbReference type="GeneID" id="75056202"/>
<dbReference type="KEGG" id="efe:EFER_2761"/>
<dbReference type="HOGENOM" id="CLU_013386_1_0_6"/>
<dbReference type="OrthoDB" id="871140at2"/>
<dbReference type="UniPathway" id="UPA00664"/>
<dbReference type="Proteomes" id="UP000000745">
    <property type="component" value="Chromosome"/>
</dbReference>
<dbReference type="GO" id="GO:0005886">
    <property type="term" value="C:plasma membrane"/>
    <property type="evidence" value="ECO:0007669"/>
    <property type="project" value="UniProtKB-SubCell"/>
</dbReference>
<dbReference type="GO" id="GO:0008961">
    <property type="term" value="F:phosphatidylglycerol-prolipoprotein diacylglyceryl transferase activity"/>
    <property type="evidence" value="ECO:0007669"/>
    <property type="project" value="UniProtKB-UniRule"/>
</dbReference>
<dbReference type="GO" id="GO:0042158">
    <property type="term" value="P:lipoprotein biosynthetic process"/>
    <property type="evidence" value="ECO:0007669"/>
    <property type="project" value="UniProtKB-UniRule"/>
</dbReference>
<dbReference type="HAMAP" id="MF_01147">
    <property type="entry name" value="Lgt"/>
    <property type="match status" value="1"/>
</dbReference>
<dbReference type="InterPro" id="IPR001640">
    <property type="entry name" value="Lgt"/>
</dbReference>
<dbReference type="NCBIfam" id="TIGR00544">
    <property type="entry name" value="lgt"/>
    <property type="match status" value="1"/>
</dbReference>
<dbReference type="PANTHER" id="PTHR30589:SF0">
    <property type="entry name" value="PHOSPHATIDYLGLYCEROL--PROLIPOPROTEIN DIACYLGLYCERYL TRANSFERASE"/>
    <property type="match status" value="1"/>
</dbReference>
<dbReference type="PANTHER" id="PTHR30589">
    <property type="entry name" value="PROLIPOPROTEIN DIACYLGLYCERYL TRANSFERASE"/>
    <property type="match status" value="1"/>
</dbReference>
<dbReference type="Pfam" id="PF01790">
    <property type="entry name" value="LGT"/>
    <property type="match status" value="1"/>
</dbReference>
<dbReference type="PROSITE" id="PS01311">
    <property type="entry name" value="LGT"/>
    <property type="match status" value="1"/>
</dbReference>